<name>BCAT2_ARATH</name>
<organism>
    <name type="scientific">Arabidopsis thaliana</name>
    <name type="common">Mouse-ear cress</name>
    <dbReference type="NCBI Taxonomy" id="3702"/>
    <lineage>
        <taxon>Eukaryota</taxon>
        <taxon>Viridiplantae</taxon>
        <taxon>Streptophyta</taxon>
        <taxon>Embryophyta</taxon>
        <taxon>Tracheophyta</taxon>
        <taxon>Spermatophyta</taxon>
        <taxon>Magnoliopsida</taxon>
        <taxon>eudicotyledons</taxon>
        <taxon>Gunneridae</taxon>
        <taxon>Pentapetalae</taxon>
        <taxon>rosids</taxon>
        <taxon>malvids</taxon>
        <taxon>Brassicales</taxon>
        <taxon>Brassicaceae</taxon>
        <taxon>Camelineae</taxon>
        <taxon>Arabidopsis</taxon>
    </lineage>
</organism>
<accession>Q9M439</accession>
<accession>O80598</accession>
<dbReference type="EC" id="2.6.1.42"/>
<dbReference type="EMBL" id="AJ271731">
    <property type="protein sequence ID" value="CAB93128.1"/>
    <property type="molecule type" value="mRNA"/>
</dbReference>
<dbReference type="EMBL" id="AC004122">
    <property type="protein sequence ID" value="AAC34333.1"/>
    <property type="status" value="ALT_SEQ"/>
    <property type="molecule type" value="Genomic_DNA"/>
</dbReference>
<dbReference type="EMBL" id="CP002684">
    <property type="protein sequence ID" value="AEE28537.1"/>
    <property type="molecule type" value="Genomic_DNA"/>
</dbReference>
<dbReference type="EMBL" id="CP002684">
    <property type="protein sequence ID" value="AEE28538.1"/>
    <property type="molecule type" value="Genomic_DNA"/>
</dbReference>
<dbReference type="EMBL" id="AY051038">
    <property type="protein sequence ID" value="AAK93715.1"/>
    <property type="molecule type" value="mRNA"/>
</dbReference>
<dbReference type="EMBL" id="AF370135">
    <property type="protein sequence ID" value="AAK43950.1"/>
    <property type="molecule type" value="mRNA"/>
</dbReference>
<dbReference type="PIR" id="T00626">
    <property type="entry name" value="T00626"/>
</dbReference>
<dbReference type="RefSeq" id="NP_001031015.1">
    <molecule id="Q9M439-1"/>
    <property type="nucleotide sequence ID" value="NM_001035938.2"/>
</dbReference>
<dbReference type="RefSeq" id="NP_001031016.2">
    <property type="nucleotide sequence ID" value="NM_001035939.3"/>
</dbReference>
<dbReference type="RefSeq" id="NP_172478.1">
    <molecule id="Q9M439-1"/>
    <property type="nucleotide sequence ID" value="NM_100881.3"/>
</dbReference>
<dbReference type="SMR" id="Q9M439"/>
<dbReference type="BioGRID" id="22783">
    <property type="interactions" value="9"/>
</dbReference>
<dbReference type="FunCoup" id="Q9M439">
    <property type="interactions" value="1769"/>
</dbReference>
<dbReference type="IntAct" id="Q9M439">
    <property type="interactions" value="2"/>
</dbReference>
<dbReference type="STRING" id="3702.Q9M439"/>
<dbReference type="iPTMnet" id="Q9M439"/>
<dbReference type="PaxDb" id="3702-AT1G10070.1"/>
<dbReference type="ProteomicsDB" id="240641">
    <molecule id="Q9M439-1"/>
</dbReference>
<dbReference type="EnsemblPlants" id="AT1G10070.1">
    <molecule id="Q9M439-1"/>
    <property type="protein sequence ID" value="AT1G10070.1"/>
    <property type="gene ID" value="AT1G10070"/>
</dbReference>
<dbReference type="EnsemblPlants" id="AT1G10070.2">
    <molecule id="Q9M439-1"/>
    <property type="protein sequence ID" value="AT1G10070.2"/>
    <property type="gene ID" value="AT1G10070"/>
</dbReference>
<dbReference type="GeneID" id="837543"/>
<dbReference type="Gramene" id="AT1G10070.1">
    <molecule id="Q9M439-1"/>
    <property type="protein sequence ID" value="AT1G10070.1"/>
    <property type="gene ID" value="AT1G10070"/>
</dbReference>
<dbReference type="Gramene" id="AT1G10070.2">
    <molecule id="Q9M439-1"/>
    <property type="protein sequence ID" value="AT1G10070.2"/>
    <property type="gene ID" value="AT1G10070"/>
</dbReference>
<dbReference type="KEGG" id="ath:AT1G10070"/>
<dbReference type="Araport" id="AT1G10070"/>
<dbReference type="TAIR" id="AT1G10070">
    <property type="gene designation" value="BCAT-2"/>
</dbReference>
<dbReference type="eggNOG" id="KOG0975">
    <property type="taxonomic scope" value="Eukaryota"/>
</dbReference>
<dbReference type="InParanoid" id="Q9M439"/>
<dbReference type="OMA" id="TDFRFIA"/>
<dbReference type="PhylomeDB" id="Q9M439"/>
<dbReference type="BRENDA" id="2.6.1.42">
    <property type="organism ID" value="399"/>
</dbReference>
<dbReference type="SABIO-RK" id="Q9M439"/>
<dbReference type="UniPathway" id="UPA00047">
    <property type="reaction ID" value="UER00058"/>
</dbReference>
<dbReference type="UniPathway" id="UPA00048">
    <property type="reaction ID" value="UER00073"/>
</dbReference>
<dbReference type="UniPathway" id="UPA00049">
    <property type="reaction ID" value="UER00062"/>
</dbReference>
<dbReference type="PRO" id="PR:Q9M439"/>
<dbReference type="Proteomes" id="UP000006548">
    <property type="component" value="Chromosome 1"/>
</dbReference>
<dbReference type="ExpressionAtlas" id="Q9M439">
    <property type="expression patterns" value="baseline and differential"/>
</dbReference>
<dbReference type="GO" id="GO:0009507">
    <property type="term" value="C:chloroplast"/>
    <property type="evidence" value="ECO:0000314"/>
    <property type="project" value="TAIR"/>
</dbReference>
<dbReference type="GO" id="GO:0052656">
    <property type="term" value="F:L-isoleucine-2-oxoglutarate transaminase activity"/>
    <property type="evidence" value="ECO:0007669"/>
    <property type="project" value="RHEA"/>
</dbReference>
<dbReference type="GO" id="GO:0052654">
    <property type="term" value="F:L-leucine-2-oxoglutarate transaminase activity"/>
    <property type="evidence" value="ECO:0007669"/>
    <property type="project" value="RHEA"/>
</dbReference>
<dbReference type="GO" id="GO:0052655">
    <property type="term" value="F:L-valine-2-oxoglutarate transaminase activity"/>
    <property type="evidence" value="ECO:0007669"/>
    <property type="project" value="RHEA"/>
</dbReference>
<dbReference type="GO" id="GO:0009097">
    <property type="term" value="P:isoleucine biosynthetic process"/>
    <property type="evidence" value="ECO:0007669"/>
    <property type="project" value="UniProtKB-UniPathway"/>
</dbReference>
<dbReference type="GO" id="GO:0009098">
    <property type="term" value="P:L-leucine biosynthetic process"/>
    <property type="evidence" value="ECO:0007669"/>
    <property type="project" value="UniProtKB-UniPathway"/>
</dbReference>
<dbReference type="GO" id="GO:0009099">
    <property type="term" value="P:L-valine biosynthetic process"/>
    <property type="evidence" value="ECO:0007669"/>
    <property type="project" value="UniProtKB-UniPathway"/>
</dbReference>
<dbReference type="GO" id="GO:0071669">
    <property type="term" value="P:plant-type cell wall organization or biogenesis"/>
    <property type="evidence" value="ECO:0000315"/>
    <property type="project" value="TAIR"/>
</dbReference>
<dbReference type="CDD" id="cd01557">
    <property type="entry name" value="BCAT_beta_family"/>
    <property type="match status" value="1"/>
</dbReference>
<dbReference type="FunFam" id="3.20.10.10:FF:000003">
    <property type="entry name" value="Branched-chain-amino-acid aminotransferase"/>
    <property type="match status" value="1"/>
</dbReference>
<dbReference type="FunFam" id="3.30.470.10:FF:000003">
    <property type="entry name" value="Branched-chain-amino-acid aminotransferase"/>
    <property type="match status" value="1"/>
</dbReference>
<dbReference type="Gene3D" id="3.30.470.10">
    <property type="match status" value="1"/>
</dbReference>
<dbReference type="Gene3D" id="3.20.10.10">
    <property type="entry name" value="D-amino Acid Aminotransferase, subunit A, domain 2"/>
    <property type="match status" value="1"/>
</dbReference>
<dbReference type="InterPro" id="IPR001544">
    <property type="entry name" value="Aminotrans_IV"/>
</dbReference>
<dbReference type="InterPro" id="IPR018300">
    <property type="entry name" value="Aminotrans_IV_CS"/>
</dbReference>
<dbReference type="InterPro" id="IPR036038">
    <property type="entry name" value="Aminotransferase-like"/>
</dbReference>
<dbReference type="InterPro" id="IPR005786">
    <property type="entry name" value="B_amino_transII"/>
</dbReference>
<dbReference type="InterPro" id="IPR043132">
    <property type="entry name" value="BCAT-like_C"/>
</dbReference>
<dbReference type="InterPro" id="IPR043131">
    <property type="entry name" value="BCAT-like_N"/>
</dbReference>
<dbReference type="InterPro" id="IPR033939">
    <property type="entry name" value="BCAT_family"/>
</dbReference>
<dbReference type="NCBIfam" id="TIGR01123">
    <property type="entry name" value="ilvE_II"/>
    <property type="match status" value="1"/>
</dbReference>
<dbReference type="NCBIfam" id="NF009897">
    <property type="entry name" value="PRK13357.1"/>
    <property type="match status" value="1"/>
</dbReference>
<dbReference type="PANTHER" id="PTHR42825">
    <property type="entry name" value="AMINO ACID AMINOTRANSFERASE"/>
    <property type="match status" value="1"/>
</dbReference>
<dbReference type="PANTHER" id="PTHR42825:SF9">
    <property type="entry name" value="BRANCHED-CHAIN-AMINO-ACID AMINOTRANSFERASE 2, CHLOROPLASTIC"/>
    <property type="match status" value="1"/>
</dbReference>
<dbReference type="Pfam" id="PF01063">
    <property type="entry name" value="Aminotran_4"/>
    <property type="match status" value="1"/>
</dbReference>
<dbReference type="PIRSF" id="PIRSF006468">
    <property type="entry name" value="BCAT1"/>
    <property type="match status" value="1"/>
</dbReference>
<dbReference type="SUPFAM" id="SSF56752">
    <property type="entry name" value="D-aminoacid aminotransferase-like PLP-dependent enzymes"/>
    <property type="match status" value="1"/>
</dbReference>
<dbReference type="PROSITE" id="PS00770">
    <property type="entry name" value="AA_TRANSFER_CLASS_4"/>
    <property type="match status" value="1"/>
</dbReference>
<evidence type="ECO:0000250" key="1"/>
<evidence type="ECO:0000255" key="2"/>
<evidence type="ECO:0000269" key="3">
    <source>
    </source>
</evidence>
<evidence type="ECO:0000305" key="4"/>
<comment type="function">
    <text evidence="3">Converts 2-oxo acids to branched-chain amino acids. Shows activity with L-Leu, L-Ile and L-Val as amino donors and 2-oxoglutarate as an amino acceptor, but no activity for D-isomers of Leu, Ile, Val, Asp, Glu or Ala.</text>
</comment>
<comment type="catalytic activity">
    <reaction evidence="3">
        <text>L-leucine + 2-oxoglutarate = 4-methyl-2-oxopentanoate + L-glutamate</text>
        <dbReference type="Rhea" id="RHEA:18321"/>
        <dbReference type="ChEBI" id="CHEBI:16810"/>
        <dbReference type="ChEBI" id="CHEBI:17865"/>
        <dbReference type="ChEBI" id="CHEBI:29985"/>
        <dbReference type="ChEBI" id="CHEBI:57427"/>
        <dbReference type="EC" id="2.6.1.42"/>
    </reaction>
</comment>
<comment type="catalytic activity">
    <reaction evidence="3">
        <text>L-isoleucine + 2-oxoglutarate = (S)-3-methyl-2-oxopentanoate + L-glutamate</text>
        <dbReference type="Rhea" id="RHEA:24801"/>
        <dbReference type="ChEBI" id="CHEBI:16810"/>
        <dbReference type="ChEBI" id="CHEBI:29985"/>
        <dbReference type="ChEBI" id="CHEBI:35146"/>
        <dbReference type="ChEBI" id="CHEBI:58045"/>
        <dbReference type="EC" id="2.6.1.42"/>
    </reaction>
</comment>
<comment type="catalytic activity">
    <reaction evidence="3">
        <text>L-valine + 2-oxoglutarate = 3-methyl-2-oxobutanoate + L-glutamate</text>
        <dbReference type="Rhea" id="RHEA:24813"/>
        <dbReference type="ChEBI" id="CHEBI:11851"/>
        <dbReference type="ChEBI" id="CHEBI:16810"/>
        <dbReference type="ChEBI" id="CHEBI:29985"/>
        <dbReference type="ChEBI" id="CHEBI:57762"/>
        <dbReference type="EC" id="2.6.1.42"/>
    </reaction>
</comment>
<comment type="cofactor">
    <cofactor>
        <name>pyridoxal 5'-phosphate</name>
        <dbReference type="ChEBI" id="CHEBI:597326"/>
    </cofactor>
</comment>
<comment type="biophysicochemical properties">
    <kinetics>
        <KM evidence="3">0.71 mM for L-leucine</KM>
    </kinetics>
</comment>
<comment type="pathway">
    <text>Amino-acid biosynthesis; L-isoleucine biosynthesis; L-isoleucine from 2-oxobutanoate: step 4/4.</text>
</comment>
<comment type="pathway">
    <text>Amino-acid biosynthesis; L-leucine biosynthesis; L-leucine from 3-methyl-2-oxobutanoate: step 4/4.</text>
</comment>
<comment type="pathway">
    <text>Amino-acid biosynthesis; L-valine biosynthesis; L-valine from pyruvate: step 4/4.</text>
</comment>
<comment type="subcellular location">
    <subcellularLocation>
        <location>Plastid</location>
        <location>Chloroplast</location>
    </subcellularLocation>
</comment>
<comment type="alternative products">
    <event type="alternative splicing"/>
    <isoform>
        <id>Q9M439-1</id>
        <name>1</name>
        <sequence type="displayed"/>
    </isoform>
    <text>A number of isoforms are produced. According to EST sequences.</text>
</comment>
<comment type="miscellaneous">
    <text>Branched-chain amino acids are synthesized in chloroplasts, whereas the degradation takes place in mitochondria.</text>
</comment>
<comment type="similarity">
    <text evidence="4">Belongs to the class-IV pyridoxal-phosphate-dependent aminotransferase family.</text>
</comment>
<comment type="sequence caution" evidence="4">
    <conflict type="erroneous gene model prediction">
        <sequence resource="EMBL-CDS" id="AAC34333"/>
    </conflict>
</comment>
<proteinExistence type="evidence at protein level"/>
<sequence length="388" mass="42591">MIKTITSLRKTLVLPLHLHIRTLQTFAKYNAQAASALREERKKPLYQNGDDVYADLDWDNLGFGLNPADYMYVMKCSKDGEFTQGELSPYGNIQLSPSAGVLNYGQAIYEGTKAYRKENGKLLLFRPDHNAIRMKLGAERMLMPSPSVDQFVNAVKQTALANKRWVPPAGKGTLYIRPLLMGSGPILGLGPAPEYTFIVYASPVGNYFKEGMAALNLYVEEEYVRAAPGGAGGVKSITNYAPVLKALSRAKSRGFSDVLYLDSVKKKYLEEASSCNVFVVKGRTISTPATNGTILEGITRKSVMEIASDQGYQVVEKAVHVDEVMDADEVFCTGTAVVVAPVGTITYQEKRVEYKTGDESVCQKLRSVLVGIQTGLIEDNKGWVTDIN</sequence>
<feature type="transit peptide" description="Chloroplast" evidence="2">
    <location>
        <begin position="1"/>
        <end position="22"/>
    </location>
</feature>
<feature type="chain" id="PRO_0000001276" description="Branched-chain-amino-acid aminotransferase 2, chloroplastic">
    <location>
        <begin position="23"/>
        <end position="388"/>
    </location>
</feature>
<feature type="modified residue" description="N6-(pyridoxal phosphate)lysine" evidence="1">
    <location>
        <position position="235"/>
    </location>
</feature>
<reference key="1">
    <citation type="journal article" date="2002" name="Plant Physiol.">
        <title>The branched-chain amino acid transaminase gene family in Arabidopsis encodes plastid and mitochondrial proteins.</title>
        <authorList>
            <person name="Diebold R."/>
            <person name="Schuster J."/>
            <person name="Daschner K."/>
            <person name="Binder S."/>
        </authorList>
    </citation>
    <scope>NUCLEOTIDE SEQUENCE [MRNA]</scope>
    <scope>CHARACTERIZATION</scope>
    <source>
        <strain>cv. Columbia</strain>
    </source>
</reference>
<reference key="2">
    <citation type="journal article" date="2000" name="Nature">
        <title>Sequence and analysis of chromosome 1 of the plant Arabidopsis thaliana.</title>
        <authorList>
            <person name="Theologis A."/>
            <person name="Ecker J.R."/>
            <person name="Palm C.J."/>
            <person name="Federspiel N.A."/>
            <person name="Kaul S."/>
            <person name="White O."/>
            <person name="Alonso J."/>
            <person name="Altafi H."/>
            <person name="Araujo R."/>
            <person name="Bowman C.L."/>
            <person name="Brooks S.Y."/>
            <person name="Buehler E."/>
            <person name="Chan A."/>
            <person name="Chao Q."/>
            <person name="Chen H."/>
            <person name="Cheuk R.F."/>
            <person name="Chin C.W."/>
            <person name="Chung M.K."/>
            <person name="Conn L."/>
            <person name="Conway A.B."/>
            <person name="Conway A.R."/>
            <person name="Creasy T.H."/>
            <person name="Dewar K."/>
            <person name="Dunn P."/>
            <person name="Etgu P."/>
            <person name="Feldblyum T.V."/>
            <person name="Feng J.-D."/>
            <person name="Fong B."/>
            <person name="Fujii C.Y."/>
            <person name="Gill J.E."/>
            <person name="Goldsmith A.D."/>
            <person name="Haas B."/>
            <person name="Hansen N.F."/>
            <person name="Hughes B."/>
            <person name="Huizar L."/>
            <person name="Hunter J.L."/>
            <person name="Jenkins J."/>
            <person name="Johnson-Hopson C."/>
            <person name="Khan S."/>
            <person name="Khaykin E."/>
            <person name="Kim C.J."/>
            <person name="Koo H.L."/>
            <person name="Kremenetskaia I."/>
            <person name="Kurtz D.B."/>
            <person name="Kwan A."/>
            <person name="Lam B."/>
            <person name="Langin-Hooper S."/>
            <person name="Lee A."/>
            <person name="Lee J.M."/>
            <person name="Lenz C.A."/>
            <person name="Li J.H."/>
            <person name="Li Y.-P."/>
            <person name="Lin X."/>
            <person name="Liu S.X."/>
            <person name="Liu Z.A."/>
            <person name="Luros J.S."/>
            <person name="Maiti R."/>
            <person name="Marziali A."/>
            <person name="Militscher J."/>
            <person name="Miranda M."/>
            <person name="Nguyen M."/>
            <person name="Nierman W.C."/>
            <person name="Osborne B.I."/>
            <person name="Pai G."/>
            <person name="Peterson J."/>
            <person name="Pham P.K."/>
            <person name="Rizzo M."/>
            <person name="Rooney T."/>
            <person name="Rowley D."/>
            <person name="Sakano H."/>
            <person name="Salzberg S.L."/>
            <person name="Schwartz J.R."/>
            <person name="Shinn P."/>
            <person name="Southwick A.M."/>
            <person name="Sun H."/>
            <person name="Tallon L.J."/>
            <person name="Tambunga G."/>
            <person name="Toriumi M.J."/>
            <person name="Town C.D."/>
            <person name="Utterback T."/>
            <person name="Van Aken S."/>
            <person name="Vaysberg M."/>
            <person name="Vysotskaia V.S."/>
            <person name="Walker M."/>
            <person name="Wu D."/>
            <person name="Yu G."/>
            <person name="Fraser C.M."/>
            <person name="Venter J.C."/>
            <person name="Davis R.W."/>
        </authorList>
    </citation>
    <scope>NUCLEOTIDE SEQUENCE [LARGE SCALE GENOMIC DNA]</scope>
    <source>
        <strain>cv. Columbia</strain>
    </source>
</reference>
<reference key="3">
    <citation type="journal article" date="2017" name="Plant J.">
        <title>Araport11: a complete reannotation of the Arabidopsis thaliana reference genome.</title>
        <authorList>
            <person name="Cheng C.Y."/>
            <person name="Krishnakumar V."/>
            <person name="Chan A.P."/>
            <person name="Thibaud-Nissen F."/>
            <person name="Schobel S."/>
            <person name="Town C.D."/>
        </authorList>
    </citation>
    <scope>GENOME REANNOTATION</scope>
    <source>
        <strain>cv. Columbia</strain>
    </source>
</reference>
<reference key="4">
    <citation type="journal article" date="2003" name="Science">
        <title>Empirical analysis of transcriptional activity in the Arabidopsis genome.</title>
        <authorList>
            <person name="Yamada K."/>
            <person name="Lim J."/>
            <person name="Dale J.M."/>
            <person name="Chen H."/>
            <person name="Shinn P."/>
            <person name="Palm C.J."/>
            <person name="Southwick A.M."/>
            <person name="Wu H.C."/>
            <person name="Kim C.J."/>
            <person name="Nguyen M."/>
            <person name="Pham P.K."/>
            <person name="Cheuk R.F."/>
            <person name="Karlin-Newmann G."/>
            <person name="Liu S.X."/>
            <person name="Lam B."/>
            <person name="Sakano H."/>
            <person name="Wu T."/>
            <person name="Yu G."/>
            <person name="Miranda M."/>
            <person name="Quach H.L."/>
            <person name="Tripp M."/>
            <person name="Chang C.H."/>
            <person name="Lee J.M."/>
            <person name="Toriumi M.J."/>
            <person name="Chan M.M."/>
            <person name="Tang C.C."/>
            <person name="Onodera C.S."/>
            <person name="Deng J.M."/>
            <person name="Akiyama K."/>
            <person name="Ansari Y."/>
            <person name="Arakawa T."/>
            <person name="Banh J."/>
            <person name="Banno F."/>
            <person name="Bowser L."/>
            <person name="Brooks S.Y."/>
            <person name="Carninci P."/>
            <person name="Chao Q."/>
            <person name="Choy N."/>
            <person name="Enju A."/>
            <person name="Goldsmith A.D."/>
            <person name="Gurjal M."/>
            <person name="Hansen N.F."/>
            <person name="Hayashizaki Y."/>
            <person name="Johnson-Hopson C."/>
            <person name="Hsuan V.W."/>
            <person name="Iida K."/>
            <person name="Karnes M."/>
            <person name="Khan S."/>
            <person name="Koesema E."/>
            <person name="Ishida J."/>
            <person name="Jiang P.X."/>
            <person name="Jones T."/>
            <person name="Kawai J."/>
            <person name="Kamiya A."/>
            <person name="Meyers C."/>
            <person name="Nakajima M."/>
            <person name="Narusaka M."/>
            <person name="Seki M."/>
            <person name="Sakurai T."/>
            <person name="Satou M."/>
            <person name="Tamse R."/>
            <person name="Vaysberg M."/>
            <person name="Wallender E.K."/>
            <person name="Wong C."/>
            <person name="Yamamura Y."/>
            <person name="Yuan S."/>
            <person name="Shinozaki K."/>
            <person name="Davis R.W."/>
            <person name="Theologis A."/>
            <person name="Ecker J.R."/>
        </authorList>
    </citation>
    <scope>NUCLEOTIDE SEQUENCE [LARGE SCALE MRNA]</scope>
    <source>
        <strain>cv. Columbia</strain>
    </source>
</reference>
<reference key="5">
    <citation type="journal article" date="2008" name="FEBS J.">
        <title>Cloning and functional characterization of Arabidopsis thaliana D-amino acid aminotransferase--D-aspartate behavior during germination.</title>
        <authorList>
            <person name="Funakoshi M."/>
            <person name="Sekine M."/>
            <person name="Katane M."/>
            <person name="Furuchi T."/>
            <person name="Yohda M."/>
            <person name="Yoshikawa T."/>
            <person name="Homma H."/>
        </authorList>
    </citation>
    <scope>FUNCTION</scope>
    <scope>CATALYTIC ACTIVITY</scope>
    <scope>BIOPHYSICOCHEMICAL PROPERTIES</scope>
</reference>
<protein>
    <recommendedName>
        <fullName>Branched-chain-amino-acid aminotransferase 2, chloroplastic</fullName>
        <shortName>Atbcat-2</shortName>
        <ecNumber>2.6.1.42</ecNumber>
    </recommendedName>
</protein>
<gene>
    <name type="primary">BCAT2</name>
    <name type="ordered locus">At1g10070</name>
    <name type="ORF">T27I1.9</name>
</gene>
<keyword id="KW-0025">Alternative splicing</keyword>
<keyword id="KW-0028">Amino-acid biosynthesis</keyword>
<keyword id="KW-0032">Aminotransferase</keyword>
<keyword id="KW-0100">Branched-chain amino acid biosynthesis</keyword>
<keyword id="KW-0150">Chloroplast</keyword>
<keyword id="KW-0934">Plastid</keyword>
<keyword id="KW-0663">Pyridoxal phosphate</keyword>
<keyword id="KW-1185">Reference proteome</keyword>
<keyword id="KW-0808">Transferase</keyword>
<keyword id="KW-0809">Transit peptide</keyword>